<organism>
    <name type="scientific">Salmonella paratyphi C (strain RKS4594)</name>
    <dbReference type="NCBI Taxonomy" id="476213"/>
    <lineage>
        <taxon>Bacteria</taxon>
        <taxon>Pseudomonadati</taxon>
        <taxon>Pseudomonadota</taxon>
        <taxon>Gammaproteobacteria</taxon>
        <taxon>Enterobacterales</taxon>
        <taxon>Enterobacteriaceae</taxon>
        <taxon>Salmonella</taxon>
    </lineage>
</organism>
<sequence length="264" mass="30349">MKQYLELMQKVLDEGTQKNDRTGTGTLSIFGHQMRFNLQEGFPLVTTKHCHLRSIIHELLWFLQGDTNIAYLHENNVTIWDEWADENGDLGPVYGKQWRAWPTPDGRHIDQIATVLSQLKNDPDSRRIIVSAWNVGELDKMALAPCHAFFQFYVADGKLSCQLYQRSCDVFLGLPFNIASYALLVHMMAQQCDLDVGDFVWTGGDTHLYSNHMEQTHLQLSREPRALPKLVIKRKPDSLFDYRFDDFEIEGYDPHPGIKAPVAI</sequence>
<reference key="1">
    <citation type="journal article" date="2009" name="PLoS ONE">
        <title>Salmonella paratyphi C: genetic divergence from Salmonella choleraesuis and pathogenic convergence with Salmonella typhi.</title>
        <authorList>
            <person name="Liu W.-Q."/>
            <person name="Feng Y."/>
            <person name="Wang Y."/>
            <person name="Zou Q.-H."/>
            <person name="Chen F."/>
            <person name="Guo J.-T."/>
            <person name="Peng Y.-H."/>
            <person name="Jin Y."/>
            <person name="Li Y.-G."/>
            <person name="Hu S.-N."/>
            <person name="Johnston R.N."/>
            <person name="Liu G.-R."/>
            <person name="Liu S.-L."/>
        </authorList>
    </citation>
    <scope>NUCLEOTIDE SEQUENCE [LARGE SCALE GENOMIC DNA]</scope>
    <source>
        <strain>RKS4594</strain>
    </source>
</reference>
<protein>
    <recommendedName>
        <fullName evidence="1">Thymidylate synthase</fullName>
        <shortName evidence="1">TS</shortName>
        <shortName evidence="1">TSase</shortName>
        <ecNumber evidence="1">2.1.1.45</ecNumber>
    </recommendedName>
</protein>
<evidence type="ECO:0000255" key="1">
    <source>
        <dbReference type="HAMAP-Rule" id="MF_00008"/>
    </source>
</evidence>
<dbReference type="EC" id="2.1.1.45" evidence="1"/>
<dbReference type="EMBL" id="CP000857">
    <property type="protein sequence ID" value="ACN47147.1"/>
    <property type="molecule type" value="Genomic_DNA"/>
</dbReference>
<dbReference type="RefSeq" id="WP_000816243.1">
    <property type="nucleotide sequence ID" value="NC_012125.1"/>
</dbReference>
<dbReference type="SMR" id="C0PXI9"/>
<dbReference type="KEGG" id="sei:SPC_3059"/>
<dbReference type="HOGENOM" id="CLU_021669_0_0_6"/>
<dbReference type="UniPathway" id="UPA00575"/>
<dbReference type="Proteomes" id="UP000001599">
    <property type="component" value="Chromosome"/>
</dbReference>
<dbReference type="GO" id="GO:0005829">
    <property type="term" value="C:cytosol"/>
    <property type="evidence" value="ECO:0007669"/>
    <property type="project" value="TreeGrafter"/>
</dbReference>
<dbReference type="GO" id="GO:0004799">
    <property type="term" value="F:thymidylate synthase activity"/>
    <property type="evidence" value="ECO:0007669"/>
    <property type="project" value="UniProtKB-UniRule"/>
</dbReference>
<dbReference type="GO" id="GO:0006231">
    <property type="term" value="P:dTMP biosynthetic process"/>
    <property type="evidence" value="ECO:0007669"/>
    <property type="project" value="UniProtKB-UniRule"/>
</dbReference>
<dbReference type="GO" id="GO:0006235">
    <property type="term" value="P:dTTP biosynthetic process"/>
    <property type="evidence" value="ECO:0007669"/>
    <property type="project" value="UniProtKB-UniRule"/>
</dbReference>
<dbReference type="GO" id="GO:0032259">
    <property type="term" value="P:methylation"/>
    <property type="evidence" value="ECO:0007669"/>
    <property type="project" value="UniProtKB-KW"/>
</dbReference>
<dbReference type="CDD" id="cd00351">
    <property type="entry name" value="TS_Pyrimidine_HMase"/>
    <property type="match status" value="1"/>
</dbReference>
<dbReference type="FunFam" id="3.30.572.10:FF:000001">
    <property type="entry name" value="Thymidylate synthase"/>
    <property type="match status" value="1"/>
</dbReference>
<dbReference type="Gene3D" id="3.30.572.10">
    <property type="entry name" value="Thymidylate synthase/dCMP hydroxymethylase domain"/>
    <property type="match status" value="1"/>
</dbReference>
<dbReference type="HAMAP" id="MF_00008">
    <property type="entry name" value="Thymidy_synth_bact"/>
    <property type="match status" value="1"/>
</dbReference>
<dbReference type="InterPro" id="IPR045097">
    <property type="entry name" value="Thymidate_synth/dCMP_Mease"/>
</dbReference>
<dbReference type="InterPro" id="IPR023451">
    <property type="entry name" value="Thymidate_synth/dCMP_Mease_dom"/>
</dbReference>
<dbReference type="InterPro" id="IPR036926">
    <property type="entry name" value="Thymidate_synth/dCMP_Mease_sf"/>
</dbReference>
<dbReference type="InterPro" id="IPR000398">
    <property type="entry name" value="Thymidylate_synthase"/>
</dbReference>
<dbReference type="InterPro" id="IPR020940">
    <property type="entry name" value="Thymidylate_synthase_AS"/>
</dbReference>
<dbReference type="NCBIfam" id="NF002497">
    <property type="entry name" value="PRK01827.1-3"/>
    <property type="match status" value="1"/>
</dbReference>
<dbReference type="NCBIfam" id="NF002499">
    <property type="entry name" value="PRK01827.1-5"/>
    <property type="match status" value="1"/>
</dbReference>
<dbReference type="NCBIfam" id="TIGR03284">
    <property type="entry name" value="thym_sym"/>
    <property type="match status" value="2"/>
</dbReference>
<dbReference type="PANTHER" id="PTHR11548:SF9">
    <property type="entry name" value="THYMIDYLATE SYNTHASE"/>
    <property type="match status" value="1"/>
</dbReference>
<dbReference type="PANTHER" id="PTHR11548">
    <property type="entry name" value="THYMIDYLATE SYNTHASE 1"/>
    <property type="match status" value="1"/>
</dbReference>
<dbReference type="Pfam" id="PF00303">
    <property type="entry name" value="Thymidylat_synt"/>
    <property type="match status" value="1"/>
</dbReference>
<dbReference type="PRINTS" id="PR00108">
    <property type="entry name" value="THYMDSNTHASE"/>
</dbReference>
<dbReference type="SUPFAM" id="SSF55831">
    <property type="entry name" value="Thymidylate synthase/dCMP hydroxymethylase"/>
    <property type="match status" value="1"/>
</dbReference>
<dbReference type="PROSITE" id="PS00091">
    <property type="entry name" value="THYMIDYLATE_SYNTHASE"/>
    <property type="match status" value="1"/>
</dbReference>
<name>TYSY_SALPC</name>
<comment type="function">
    <text evidence="1">Catalyzes the reductive methylation of 2'-deoxyuridine-5'-monophosphate (dUMP) to 2'-deoxythymidine-5'-monophosphate (dTMP) while utilizing 5,10-methylenetetrahydrofolate (mTHF) as the methyl donor and reductant in the reaction, yielding dihydrofolate (DHF) as a by-product. This enzymatic reaction provides an intracellular de novo source of dTMP, an essential precursor for DNA biosynthesis.</text>
</comment>
<comment type="catalytic activity">
    <reaction evidence="1">
        <text>dUMP + (6R)-5,10-methylene-5,6,7,8-tetrahydrofolate = 7,8-dihydrofolate + dTMP</text>
        <dbReference type="Rhea" id="RHEA:12104"/>
        <dbReference type="ChEBI" id="CHEBI:15636"/>
        <dbReference type="ChEBI" id="CHEBI:57451"/>
        <dbReference type="ChEBI" id="CHEBI:63528"/>
        <dbReference type="ChEBI" id="CHEBI:246422"/>
        <dbReference type="EC" id="2.1.1.45"/>
    </reaction>
</comment>
<comment type="pathway">
    <text evidence="1">Pyrimidine metabolism; dTTP biosynthesis.</text>
</comment>
<comment type="subunit">
    <text evidence="1">Homodimer.</text>
</comment>
<comment type="subcellular location">
    <subcellularLocation>
        <location evidence="1">Cytoplasm</location>
    </subcellularLocation>
</comment>
<comment type="similarity">
    <text evidence="1">Belongs to the thymidylate synthase family. Bacterial-type ThyA subfamily.</text>
</comment>
<keyword id="KW-0963">Cytoplasm</keyword>
<keyword id="KW-0489">Methyltransferase</keyword>
<keyword id="KW-0545">Nucleotide biosynthesis</keyword>
<keyword id="KW-0808">Transferase</keyword>
<proteinExistence type="inferred from homology"/>
<accession>C0PXI9</accession>
<feature type="chain" id="PRO_1000197258" description="Thymidylate synthase">
    <location>
        <begin position="1"/>
        <end position="264"/>
    </location>
</feature>
<feature type="active site" description="Nucleophile" evidence="1">
    <location>
        <position position="146"/>
    </location>
</feature>
<feature type="binding site" description="in other chain" evidence="1">
    <location>
        <position position="21"/>
    </location>
    <ligand>
        <name>dUMP</name>
        <dbReference type="ChEBI" id="CHEBI:246422"/>
        <note>ligand shared between dimeric partners</note>
    </ligand>
</feature>
<feature type="binding site" evidence="1">
    <location>
        <position position="51"/>
    </location>
    <ligand>
        <name>(6R)-5,10-methylene-5,6,7,8-tetrahydrofolate</name>
        <dbReference type="ChEBI" id="CHEBI:15636"/>
    </ligand>
</feature>
<feature type="binding site" evidence="1">
    <location>
        <begin position="126"/>
        <end position="127"/>
    </location>
    <ligand>
        <name>dUMP</name>
        <dbReference type="ChEBI" id="CHEBI:246422"/>
        <note>ligand shared between dimeric partners</note>
    </ligand>
</feature>
<feature type="binding site" description="in other chain" evidence="1">
    <location>
        <begin position="166"/>
        <end position="169"/>
    </location>
    <ligand>
        <name>dUMP</name>
        <dbReference type="ChEBI" id="CHEBI:246422"/>
        <note>ligand shared between dimeric partners</note>
    </ligand>
</feature>
<feature type="binding site" evidence="1">
    <location>
        <position position="169"/>
    </location>
    <ligand>
        <name>(6R)-5,10-methylene-5,6,7,8-tetrahydrofolate</name>
        <dbReference type="ChEBI" id="CHEBI:15636"/>
    </ligand>
</feature>
<feature type="binding site" description="in other chain" evidence="1">
    <location>
        <position position="177"/>
    </location>
    <ligand>
        <name>dUMP</name>
        <dbReference type="ChEBI" id="CHEBI:246422"/>
        <note>ligand shared between dimeric partners</note>
    </ligand>
</feature>
<feature type="binding site" description="in other chain" evidence="1">
    <location>
        <begin position="207"/>
        <end position="209"/>
    </location>
    <ligand>
        <name>dUMP</name>
        <dbReference type="ChEBI" id="CHEBI:246422"/>
        <note>ligand shared between dimeric partners</note>
    </ligand>
</feature>
<feature type="binding site" evidence="1">
    <location>
        <position position="263"/>
    </location>
    <ligand>
        <name>(6R)-5,10-methylene-5,6,7,8-tetrahydrofolate</name>
        <dbReference type="ChEBI" id="CHEBI:15636"/>
    </ligand>
</feature>
<gene>
    <name evidence="1" type="primary">thyA</name>
    <name type="ordered locus">SPC_3059</name>
</gene>